<keyword id="KW-0963">Cytoplasm</keyword>
<keyword id="KW-0539">Nucleus</keyword>
<keyword id="KW-1185">Reference proteome</keyword>
<keyword id="KW-0694">RNA-binding</keyword>
<keyword id="KW-0813">Transport</keyword>
<keyword id="KW-0819">tRNA processing</keyword>
<keyword id="KW-0820">tRNA-binding</keyword>
<protein>
    <recommendedName>
        <fullName>Exportin-T</fullName>
    </recommendedName>
    <alternativeName>
        <fullName>Exportin(tRNA)</fullName>
    </alternativeName>
    <alternativeName>
        <fullName>Karyopherin-beta</fullName>
    </alternativeName>
    <alternativeName>
        <fullName>tRNA exportin</fullName>
    </alternativeName>
</protein>
<comment type="function">
    <text evidence="1">tRNA nucleus export receptor which facilitates tRNA translocation across the nuclear pore complex. Involved in pre-tRNA splicing, probably by affecting the interaction of pre-tRNA with splicing endonuclease (By similarity).</text>
</comment>
<comment type="subcellular location">
    <subcellularLocation>
        <location evidence="1">Nucleus</location>
    </subcellularLocation>
    <subcellularLocation>
        <location evidence="1">Cytoplasm</location>
    </subcellularLocation>
    <text evidence="1">Shuttles between the nucleus and the cytoplasm.</text>
</comment>
<comment type="similarity">
    <text evidence="2">Belongs to the exportin family.</text>
</comment>
<comment type="sequence caution" evidence="2">
    <conflict type="erroneous gene model prediction">
        <sequence resource="EMBL-CDS" id="EAU33015"/>
    </conflict>
</comment>
<evidence type="ECO:0000250" key="1"/>
<evidence type="ECO:0000305" key="2"/>
<accession>Q0CIL3</accession>
<sequence length="1028" mass="113758">MEEQVVNAIQIASNPSADQALKAQAFDYVNQLRSDPSGWQICLALFTKTPQHSEVVRHVALEVVNSAAQAGLIDPQALGYVRDGLMAYLRQVYAQETATPDSPGIQNKIAQTITFLFSALYGNGWESFFDDLLSLTYKSPSSTGRDNAPGIVFYLRVINSIHDEIGDVLVSRSRAEQDKANSLKDLIRMRDMQKIAGSWQEILSDWRDGNDIIVEMALKAVGSWVSWIDIGLVVNQTMLDLLFQQLARAQKADLRAGEDKVRDAAVDVFTEIVGKKMKAEDKVDMIIFLNLDTIVSQLSNSPPLHENRFTFKYDTDLAETVAKLVNITVCDIIRALENESTTPESKEKAGGLLQAFLPHILRYFSDEYDEVCSTVIPCVSDLLQYLRKIAKSNPALAAQHSSTLLPILKAIIAKMRYDETSSWGDEDDQADEAEFQELRKRLGVLQQSIAAVNEQLYIDAVSEVVGTTFENLRQSGAQVDWRDLDLALHEMFLFGDIAVKAGSLYTKGVPNNAAAERLVEMMMRMVESDIRSFTHPATQLGYMEICVRYSSFFLNHTQLIPGVLESFLQLIHHPIKKVKTRSWYLFQRLVKQLRAHIGNVAENVVGALGDLLVIRAELASEGSDGDDSDDHEGSVDAVFTSQLYLFEAVGIISSTPTVPTDKQALYAQSVLSPVFVDMEKNLAPAKANDERAVQQIHHDIMALGTLAKGFSDWVPGTHSPASLPAAEVSEVFLQASEATLVALESLKGSFSVRTAARFAFSRLIGVLGSRILPQLPRWIDGLMTQTSSRDEMALFLRLLDQVIFGFKGEIYGILDALLTPFLQRVFSGIADPTTGTDDEIHLAELKREYINFLLAVLNNDLGAVIISERNQPMFDTVITTIEHFAKDVEDYTTAKMAFSLLSKMGSSWGGPDITPDGANGATAQQVALPGFGQFMITRMSPLCWALPATPSFNSKDAQAKQVLAEAGGLQRTIYGKTGMEYIEYLRDRELPSMGMGAELVEEFVGALSRLDLKGFRQFFPSFIQRLSA</sequence>
<gene>
    <name type="primary">los1</name>
    <name type="ORF">ATEG_06471</name>
</gene>
<proteinExistence type="inferred from homology"/>
<dbReference type="EMBL" id="CH476602">
    <property type="protein sequence ID" value="EAU33015.1"/>
    <property type="status" value="ALT_SEQ"/>
    <property type="molecule type" value="Genomic_DNA"/>
</dbReference>
<dbReference type="RefSeq" id="XP_001215649.1">
    <property type="nucleotide sequence ID" value="XM_001215649.1"/>
</dbReference>
<dbReference type="SMR" id="Q0CIL3"/>
<dbReference type="STRING" id="341663.Q0CIL3"/>
<dbReference type="EnsemblFungi" id="EAU33015">
    <property type="protein sequence ID" value="EAU33015"/>
    <property type="gene ID" value="ATEG_06471"/>
</dbReference>
<dbReference type="GeneID" id="4322248"/>
<dbReference type="eggNOG" id="KOG2021">
    <property type="taxonomic scope" value="Eukaryota"/>
</dbReference>
<dbReference type="OrthoDB" id="26399at2759"/>
<dbReference type="Proteomes" id="UP000007963">
    <property type="component" value="Unassembled WGS sequence"/>
</dbReference>
<dbReference type="GO" id="GO:0005737">
    <property type="term" value="C:cytoplasm"/>
    <property type="evidence" value="ECO:0007669"/>
    <property type="project" value="UniProtKB-SubCell"/>
</dbReference>
<dbReference type="GO" id="GO:0016363">
    <property type="term" value="C:nuclear matrix"/>
    <property type="evidence" value="ECO:0007669"/>
    <property type="project" value="TreeGrafter"/>
</dbReference>
<dbReference type="GO" id="GO:0005643">
    <property type="term" value="C:nuclear pore"/>
    <property type="evidence" value="ECO:0007669"/>
    <property type="project" value="TreeGrafter"/>
</dbReference>
<dbReference type="GO" id="GO:0031267">
    <property type="term" value="F:small GTPase binding"/>
    <property type="evidence" value="ECO:0007669"/>
    <property type="project" value="InterPro"/>
</dbReference>
<dbReference type="GO" id="GO:0000049">
    <property type="term" value="F:tRNA binding"/>
    <property type="evidence" value="ECO:0007669"/>
    <property type="project" value="UniProtKB-KW"/>
</dbReference>
<dbReference type="GO" id="GO:0008033">
    <property type="term" value="P:tRNA processing"/>
    <property type="evidence" value="ECO:0007669"/>
    <property type="project" value="UniProtKB-KW"/>
</dbReference>
<dbReference type="GO" id="GO:0071528">
    <property type="term" value="P:tRNA re-export from nucleus"/>
    <property type="evidence" value="ECO:0007669"/>
    <property type="project" value="InterPro"/>
</dbReference>
<dbReference type="FunFam" id="1.25.10.10:FF:000355">
    <property type="entry name" value="Exportin-T"/>
    <property type="match status" value="1"/>
</dbReference>
<dbReference type="Gene3D" id="1.25.10.10">
    <property type="entry name" value="Leucine-rich Repeat Variant"/>
    <property type="match status" value="1"/>
</dbReference>
<dbReference type="InterPro" id="IPR011989">
    <property type="entry name" value="ARM-like"/>
</dbReference>
<dbReference type="InterPro" id="IPR016024">
    <property type="entry name" value="ARM-type_fold"/>
</dbReference>
<dbReference type="InterPro" id="IPR013598">
    <property type="entry name" value="Exportin-1/Importin-b-like"/>
</dbReference>
<dbReference type="InterPro" id="IPR045546">
    <property type="entry name" value="Exportin-T_C"/>
</dbReference>
<dbReference type="InterPro" id="IPR040017">
    <property type="entry name" value="XPOT"/>
</dbReference>
<dbReference type="PANTHER" id="PTHR15952:SF11">
    <property type="entry name" value="EXPORTIN-T"/>
    <property type="match status" value="1"/>
</dbReference>
<dbReference type="PANTHER" id="PTHR15952">
    <property type="entry name" value="EXPORTIN-T/LOS1"/>
    <property type="match status" value="1"/>
</dbReference>
<dbReference type="Pfam" id="PF19282">
    <property type="entry name" value="Exportin-T"/>
    <property type="match status" value="1"/>
</dbReference>
<dbReference type="Pfam" id="PF08389">
    <property type="entry name" value="Xpo1"/>
    <property type="match status" value="1"/>
</dbReference>
<dbReference type="SUPFAM" id="SSF48371">
    <property type="entry name" value="ARM repeat"/>
    <property type="match status" value="1"/>
</dbReference>
<name>XPOT_ASPTN</name>
<reference key="1">
    <citation type="submission" date="2005-09" db="EMBL/GenBank/DDBJ databases">
        <title>Annotation of the Aspergillus terreus NIH2624 genome.</title>
        <authorList>
            <person name="Birren B.W."/>
            <person name="Lander E.S."/>
            <person name="Galagan J.E."/>
            <person name="Nusbaum C."/>
            <person name="Devon K."/>
            <person name="Henn M."/>
            <person name="Ma L.-J."/>
            <person name="Jaffe D.B."/>
            <person name="Butler J."/>
            <person name="Alvarez P."/>
            <person name="Gnerre S."/>
            <person name="Grabherr M."/>
            <person name="Kleber M."/>
            <person name="Mauceli E.W."/>
            <person name="Brockman W."/>
            <person name="Rounsley S."/>
            <person name="Young S.K."/>
            <person name="LaButti K."/>
            <person name="Pushparaj V."/>
            <person name="DeCaprio D."/>
            <person name="Crawford M."/>
            <person name="Koehrsen M."/>
            <person name="Engels R."/>
            <person name="Montgomery P."/>
            <person name="Pearson M."/>
            <person name="Howarth C."/>
            <person name="Larson L."/>
            <person name="Luoma S."/>
            <person name="White J."/>
            <person name="Alvarado L."/>
            <person name="Kodira C.D."/>
            <person name="Zeng Q."/>
            <person name="Oleary S."/>
            <person name="Yandava C."/>
            <person name="Denning D.W."/>
            <person name="Nierman W.C."/>
            <person name="Milne T."/>
            <person name="Madden K."/>
        </authorList>
    </citation>
    <scope>NUCLEOTIDE SEQUENCE [LARGE SCALE GENOMIC DNA]</scope>
    <source>
        <strain>NIH 2624 / FGSC A1156</strain>
    </source>
</reference>
<organism>
    <name type="scientific">Aspergillus terreus (strain NIH 2624 / FGSC A1156)</name>
    <dbReference type="NCBI Taxonomy" id="341663"/>
    <lineage>
        <taxon>Eukaryota</taxon>
        <taxon>Fungi</taxon>
        <taxon>Dikarya</taxon>
        <taxon>Ascomycota</taxon>
        <taxon>Pezizomycotina</taxon>
        <taxon>Eurotiomycetes</taxon>
        <taxon>Eurotiomycetidae</taxon>
        <taxon>Eurotiales</taxon>
        <taxon>Aspergillaceae</taxon>
        <taxon>Aspergillus</taxon>
        <taxon>Aspergillus subgen. Circumdati</taxon>
    </lineage>
</organism>
<feature type="chain" id="PRO_0000343084" description="Exportin-T">
    <location>
        <begin position="1"/>
        <end position="1028"/>
    </location>
</feature>